<organism>
    <name type="scientific">Desulforamulus reducens (strain ATCC BAA-1160 / DSM 100696 / MI-1)</name>
    <name type="common">Desulfotomaculum reducens</name>
    <dbReference type="NCBI Taxonomy" id="349161"/>
    <lineage>
        <taxon>Bacteria</taxon>
        <taxon>Bacillati</taxon>
        <taxon>Bacillota</taxon>
        <taxon>Clostridia</taxon>
        <taxon>Eubacteriales</taxon>
        <taxon>Peptococcaceae</taxon>
        <taxon>Desulforamulus</taxon>
    </lineage>
</organism>
<reference key="1">
    <citation type="submission" date="2007-03" db="EMBL/GenBank/DDBJ databases">
        <title>Complete sequence of Desulfotomaculum reducens MI-1.</title>
        <authorList>
            <consortium name="US DOE Joint Genome Institute"/>
            <person name="Copeland A."/>
            <person name="Lucas S."/>
            <person name="Lapidus A."/>
            <person name="Barry K."/>
            <person name="Detter J.C."/>
            <person name="Glavina del Rio T."/>
            <person name="Hammon N."/>
            <person name="Israni S."/>
            <person name="Dalin E."/>
            <person name="Tice H."/>
            <person name="Pitluck S."/>
            <person name="Sims D."/>
            <person name="Brettin T."/>
            <person name="Bruce D."/>
            <person name="Han C."/>
            <person name="Tapia R."/>
            <person name="Schmutz J."/>
            <person name="Larimer F."/>
            <person name="Land M."/>
            <person name="Hauser L."/>
            <person name="Kyrpides N."/>
            <person name="Kim E."/>
            <person name="Tebo B.M."/>
            <person name="Richardson P."/>
        </authorList>
    </citation>
    <scope>NUCLEOTIDE SEQUENCE [LARGE SCALE GENOMIC DNA]</scope>
    <source>
        <strain>ATCC BAA-1160 / DSM 100696 / MI-1</strain>
    </source>
</reference>
<keyword id="KW-0067">ATP-binding</keyword>
<keyword id="KW-0436">Ligase</keyword>
<keyword id="KW-0547">Nucleotide-binding</keyword>
<keyword id="KW-0554">One-carbon metabolism</keyword>
<keyword id="KW-1185">Reference proteome</keyword>
<name>FTHS_DESRM</name>
<feature type="chain" id="PRO_0000333314" description="Formate--tetrahydrofolate ligase">
    <location>
        <begin position="1"/>
        <end position="567"/>
    </location>
</feature>
<feature type="binding site" evidence="1">
    <location>
        <begin position="68"/>
        <end position="75"/>
    </location>
    <ligand>
        <name>ATP</name>
        <dbReference type="ChEBI" id="CHEBI:30616"/>
    </ligand>
</feature>
<gene>
    <name evidence="1" type="primary">fhs</name>
    <name type="ordered locus">Dred_0129</name>
</gene>
<comment type="catalytic activity">
    <reaction evidence="1">
        <text>(6S)-5,6,7,8-tetrahydrofolate + formate + ATP = (6R)-10-formyltetrahydrofolate + ADP + phosphate</text>
        <dbReference type="Rhea" id="RHEA:20221"/>
        <dbReference type="ChEBI" id="CHEBI:15740"/>
        <dbReference type="ChEBI" id="CHEBI:30616"/>
        <dbReference type="ChEBI" id="CHEBI:43474"/>
        <dbReference type="ChEBI" id="CHEBI:57453"/>
        <dbReference type="ChEBI" id="CHEBI:195366"/>
        <dbReference type="ChEBI" id="CHEBI:456216"/>
        <dbReference type="EC" id="6.3.4.3"/>
    </reaction>
</comment>
<comment type="pathway">
    <text evidence="1">One-carbon metabolism; tetrahydrofolate interconversion.</text>
</comment>
<comment type="similarity">
    <text evidence="1">Belongs to the formate--tetrahydrofolate ligase family.</text>
</comment>
<protein>
    <recommendedName>
        <fullName evidence="1">Formate--tetrahydrofolate ligase</fullName>
        <ecNumber evidence="1">6.3.4.3</ecNumber>
    </recommendedName>
    <alternativeName>
        <fullName evidence="1">Formyltetrahydrofolate synthetase</fullName>
        <shortName evidence="1">FHS</shortName>
        <shortName evidence="1">FTHFS</shortName>
    </alternativeName>
</protein>
<proteinExistence type="inferred from homology"/>
<accession>A4J0S6</accession>
<evidence type="ECO:0000255" key="1">
    <source>
        <dbReference type="HAMAP-Rule" id="MF_01543"/>
    </source>
</evidence>
<dbReference type="EC" id="6.3.4.3" evidence="1"/>
<dbReference type="EMBL" id="CP000612">
    <property type="protein sequence ID" value="ABO48679.1"/>
    <property type="molecule type" value="Genomic_DNA"/>
</dbReference>
<dbReference type="RefSeq" id="WP_011876523.1">
    <property type="nucleotide sequence ID" value="NC_009253.1"/>
</dbReference>
<dbReference type="SMR" id="A4J0S6"/>
<dbReference type="STRING" id="349161.Dred_0129"/>
<dbReference type="KEGG" id="drm:Dred_0129"/>
<dbReference type="eggNOG" id="COG2759">
    <property type="taxonomic scope" value="Bacteria"/>
</dbReference>
<dbReference type="HOGENOM" id="CLU_003601_3_3_9"/>
<dbReference type="OrthoDB" id="9761733at2"/>
<dbReference type="UniPathway" id="UPA00193"/>
<dbReference type="Proteomes" id="UP000001556">
    <property type="component" value="Chromosome"/>
</dbReference>
<dbReference type="GO" id="GO:0005524">
    <property type="term" value="F:ATP binding"/>
    <property type="evidence" value="ECO:0007669"/>
    <property type="project" value="UniProtKB-UniRule"/>
</dbReference>
<dbReference type="GO" id="GO:0004329">
    <property type="term" value="F:formate-tetrahydrofolate ligase activity"/>
    <property type="evidence" value="ECO:0007669"/>
    <property type="project" value="UniProtKB-UniRule"/>
</dbReference>
<dbReference type="GO" id="GO:0035999">
    <property type="term" value="P:tetrahydrofolate interconversion"/>
    <property type="evidence" value="ECO:0007669"/>
    <property type="project" value="UniProtKB-UniRule"/>
</dbReference>
<dbReference type="CDD" id="cd00477">
    <property type="entry name" value="FTHFS"/>
    <property type="match status" value="1"/>
</dbReference>
<dbReference type="FunFam" id="3.30.1510.10:FF:000001">
    <property type="entry name" value="Formate--tetrahydrofolate ligase"/>
    <property type="match status" value="1"/>
</dbReference>
<dbReference type="FunFam" id="3.10.410.10:FF:000001">
    <property type="entry name" value="Putative formate--tetrahydrofolate ligase"/>
    <property type="match status" value="1"/>
</dbReference>
<dbReference type="Gene3D" id="3.30.1510.10">
    <property type="entry name" value="Domain 2, N(10)-formyltetrahydrofolate synthetase"/>
    <property type="match status" value="1"/>
</dbReference>
<dbReference type="Gene3D" id="3.10.410.10">
    <property type="entry name" value="Formyltetrahydrofolate synthetase, domain 3"/>
    <property type="match status" value="1"/>
</dbReference>
<dbReference type="Gene3D" id="3.40.50.300">
    <property type="entry name" value="P-loop containing nucleotide triphosphate hydrolases"/>
    <property type="match status" value="1"/>
</dbReference>
<dbReference type="HAMAP" id="MF_01543">
    <property type="entry name" value="FTHFS"/>
    <property type="match status" value="1"/>
</dbReference>
<dbReference type="InterPro" id="IPR000559">
    <property type="entry name" value="Formate_THF_ligase"/>
</dbReference>
<dbReference type="InterPro" id="IPR020628">
    <property type="entry name" value="Formate_THF_ligase_CS"/>
</dbReference>
<dbReference type="InterPro" id="IPR027417">
    <property type="entry name" value="P-loop_NTPase"/>
</dbReference>
<dbReference type="NCBIfam" id="NF010030">
    <property type="entry name" value="PRK13505.1"/>
    <property type="match status" value="1"/>
</dbReference>
<dbReference type="Pfam" id="PF01268">
    <property type="entry name" value="FTHFS"/>
    <property type="match status" value="1"/>
</dbReference>
<dbReference type="SUPFAM" id="SSF52540">
    <property type="entry name" value="P-loop containing nucleoside triphosphate hydrolases"/>
    <property type="match status" value="1"/>
</dbReference>
<dbReference type="PROSITE" id="PS00721">
    <property type="entry name" value="FTHFS_1"/>
    <property type="match status" value="1"/>
</dbReference>
<sequence length="567" mass="60771">MKKVPSDLEIAQAHEMIPIAEIAKNIGLGEDDIDLYGKYKAKISLDVLRKFNDRAMGKLIDITAITPTPLGEGKTVTTIGLCQGLGKIGKKVITTLRQPSMGPVFGIKGGAAGGGYSQVVPMEDINIHFTGDIHAVEAANNLLAAMIDTSILLGNPLNIDPMTVMWNRVLDTNDRALRDIVVGLGGKENGYPRQTSFDMAVASEVMAILALAENLHDLRQRLGRIIVAYTYDGKPVTAEDLKAAGAMTVIMKEALKPNLVQTLEGQACIMHAGPFANIAHGNNSVLADKIALNLADYVVTESGFGSDLGMEKFMDIKCRQSGLRPSCVVITCTIRALKMHGGLGNVVAGKPLPEELTRENLPALEKGCANLAHHIKVASYYGVPVVVSINRFTPDTDAEVDLVRKKALEAGALGAYPITVWAEGGEGAIELAEAVVAACEKTADFQLLYPDNLSIKEKIEVLATKVYNADGVVFEPLAERKIKQFEDLGLGHLPICMAKTHLSISHDPAMKGLPKNYIFPIRDIRASVGAGFLYPLAGAMRTMPGLGSKPAAHNVDIDEYGRTVGLF</sequence>